<protein>
    <recommendedName>
        <fullName evidence="1">Large ribosomal subunit protein bL9</fullName>
    </recommendedName>
    <alternativeName>
        <fullName evidence="2">50S ribosomal protein L9</fullName>
    </alternativeName>
</protein>
<name>RL9_LACLS</name>
<reference key="1">
    <citation type="journal article" date="2006" name="Proc. Natl. Acad. Sci. U.S.A.">
        <title>Comparative genomics of the lactic acid bacteria.</title>
        <authorList>
            <person name="Makarova K.S."/>
            <person name="Slesarev A."/>
            <person name="Wolf Y.I."/>
            <person name="Sorokin A."/>
            <person name="Mirkin B."/>
            <person name="Koonin E.V."/>
            <person name="Pavlov A."/>
            <person name="Pavlova N."/>
            <person name="Karamychev V."/>
            <person name="Polouchine N."/>
            <person name="Shakhova V."/>
            <person name="Grigoriev I."/>
            <person name="Lou Y."/>
            <person name="Rohksar D."/>
            <person name="Lucas S."/>
            <person name="Huang K."/>
            <person name="Goodstein D.M."/>
            <person name="Hawkins T."/>
            <person name="Plengvidhya V."/>
            <person name="Welker D."/>
            <person name="Hughes J."/>
            <person name="Goh Y."/>
            <person name="Benson A."/>
            <person name="Baldwin K."/>
            <person name="Lee J.-H."/>
            <person name="Diaz-Muniz I."/>
            <person name="Dosti B."/>
            <person name="Smeianov V."/>
            <person name="Wechter W."/>
            <person name="Barabote R."/>
            <person name="Lorca G."/>
            <person name="Altermann E."/>
            <person name="Barrangou R."/>
            <person name="Ganesan B."/>
            <person name="Xie Y."/>
            <person name="Rawsthorne H."/>
            <person name="Tamir D."/>
            <person name="Parker C."/>
            <person name="Breidt F."/>
            <person name="Broadbent J.R."/>
            <person name="Hutkins R."/>
            <person name="O'Sullivan D."/>
            <person name="Steele J."/>
            <person name="Unlu G."/>
            <person name="Saier M.H. Jr."/>
            <person name="Klaenhammer T."/>
            <person name="Richardson P."/>
            <person name="Kozyavkin S."/>
            <person name="Weimer B.C."/>
            <person name="Mills D.A."/>
        </authorList>
    </citation>
    <scope>NUCLEOTIDE SEQUENCE [LARGE SCALE GENOMIC DNA]</scope>
    <source>
        <strain>SK11</strain>
    </source>
</reference>
<feature type="chain" id="PRO_1000014799" description="Large ribosomal subunit protein bL9">
    <location>
        <begin position="1"/>
        <end position="150"/>
    </location>
</feature>
<dbReference type="EMBL" id="CP000425">
    <property type="protein sequence ID" value="ABJ72346.1"/>
    <property type="molecule type" value="Genomic_DNA"/>
</dbReference>
<dbReference type="RefSeq" id="WP_011675716.1">
    <property type="nucleotide sequence ID" value="NC_008527.1"/>
</dbReference>
<dbReference type="SMR" id="Q030M6"/>
<dbReference type="KEGG" id="llc:LACR_0789"/>
<dbReference type="HOGENOM" id="CLU_078938_3_2_9"/>
<dbReference type="Proteomes" id="UP000000240">
    <property type="component" value="Chromosome"/>
</dbReference>
<dbReference type="GO" id="GO:1990904">
    <property type="term" value="C:ribonucleoprotein complex"/>
    <property type="evidence" value="ECO:0007669"/>
    <property type="project" value="UniProtKB-KW"/>
</dbReference>
<dbReference type="GO" id="GO:0005840">
    <property type="term" value="C:ribosome"/>
    <property type="evidence" value="ECO:0007669"/>
    <property type="project" value="UniProtKB-KW"/>
</dbReference>
<dbReference type="GO" id="GO:0019843">
    <property type="term" value="F:rRNA binding"/>
    <property type="evidence" value="ECO:0007669"/>
    <property type="project" value="UniProtKB-UniRule"/>
</dbReference>
<dbReference type="GO" id="GO:0003735">
    <property type="term" value="F:structural constituent of ribosome"/>
    <property type="evidence" value="ECO:0007669"/>
    <property type="project" value="InterPro"/>
</dbReference>
<dbReference type="GO" id="GO:0006412">
    <property type="term" value="P:translation"/>
    <property type="evidence" value="ECO:0007669"/>
    <property type="project" value="UniProtKB-UniRule"/>
</dbReference>
<dbReference type="FunFam" id="3.40.5.10:FF:000002">
    <property type="entry name" value="50S ribosomal protein L9"/>
    <property type="match status" value="1"/>
</dbReference>
<dbReference type="Gene3D" id="3.10.430.100">
    <property type="entry name" value="Ribosomal protein L9, C-terminal domain"/>
    <property type="match status" value="1"/>
</dbReference>
<dbReference type="Gene3D" id="3.40.5.10">
    <property type="entry name" value="Ribosomal protein L9, N-terminal domain"/>
    <property type="match status" value="1"/>
</dbReference>
<dbReference type="HAMAP" id="MF_00503">
    <property type="entry name" value="Ribosomal_bL9"/>
    <property type="match status" value="1"/>
</dbReference>
<dbReference type="InterPro" id="IPR000244">
    <property type="entry name" value="Ribosomal_bL9"/>
</dbReference>
<dbReference type="InterPro" id="IPR009027">
    <property type="entry name" value="Ribosomal_bL9/RNase_H1_N"/>
</dbReference>
<dbReference type="InterPro" id="IPR020594">
    <property type="entry name" value="Ribosomal_bL9_bac/chp"/>
</dbReference>
<dbReference type="InterPro" id="IPR020069">
    <property type="entry name" value="Ribosomal_bL9_C"/>
</dbReference>
<dbReference type="InterPro" id="IPR036791">
    <property type="entry name" value="Ribosomal_bL9_C_sf"/>
</dbReference>
<dbReference type="InterPro" id="IPR020070">
    <property type="entry name" value="Ribosomal_bL9_N"/>
</dbReference>
<dbReference type="InterPro" id="IPR036935">
    <property type="entry name" value="Ribosomal_bL9_N_sf"/>
</dbReference>
<dbReference type="NCBIfam" id="TIGR00158">
    <property type="entry name" value="L9"/>
    <property type="match status" value="1"/>
</dbReference>
<dbReference type="PANTHER" id="PTHR21368">
    <property type="entry name" value="50S RIBOSOMAL PROTEIN L9"/>
    <property type="match status" value="1"/>
</dbReference>
<dbReference type="Pfam" id="PF03948">
    <property type="entry name" value="Ribosomal_L9_C"/>
    <property type="match status" value="1"/>
</dbReference>
<dbReference type="Pfam" id="PF01281">
    <property type="entry name" value="Ribosomal_L9_N"/>
    <property type="match status" value="1"/>
</dbReference>
<dbReference type="SUPFAM" id="SSF55658">
    <property type="entry name" value="L9 N-domain-like"/>
    <property type="match status" value="1"/>
</dbReference>
<dbReference type="SUPFAM" id="SSF55653">
    <property type="entry name" value="Ribosomal protein L9 C-domain"/>
    <property type="match status" value="1"/>
</dbReference>
<dbReference type="PROSITE" id="PS00651">
    <property type="entry name" value="RIBOSOMAL_L9"/>
    <property type="match status" value="1"/>
</dbReference>
<comment type="function">
    <text evidence="1">Binds to the 23S rRNA.</text>
</comment>
<comment type="similarity">
    <text evidence="1">Belongs to the bacterial ribosomal protein bL9 family.</text>
</comment>
<accession>Q030M6</accession>
<organism>
    <name type="scientific">Lactococcus lactis subsp. cremoris (strain SK11)</name>
    <dbReference type="NCBI Taxonomy" id="272622"/>
    <lineage>
        <taxon>Bacteria</taxon>
        <taxon>Bacillati</taxon>
        <taxon>Bacillota</taxon>
        <taxon>Bacilli</taxon>
        <taxon>Lactobacillales</taxon>
        <taxon>Streptococcaceae</taxon>
        <taxon>Lactococcus</taxon>
        <taxon>Lactococcus cremoris subsp. cremoris</taxon>
    </lineage>
</organism>
<keyword id="KW-0687">Ribonucleoprotein</keyword>
<keyword id="KW-0689">Ribosomal protein</keyword>
<keyword id="KW-0694">RNA-binding</keyword>
<keyword id="KW-0699">rRNA-binding</keyword>
<sequence length="150" mass="16350">MKVVFLEDVKGQGKKGQIKEVPTGYAQNFLIKKNLAKVATAAALSEVKGQAKAKEKEEAELLAEAKALKEVLEKDETVVEIKMKVGQTGHTFGAVDKADIAKALKSQFGLKLDKRKIQLINKIQALGTKDVPVKLHRDVTAMVKVKISEA</sequence>
<gene>
    <name evidence="1" type="primary">rplI</name>
    <name type="ordered locus">LACR_0789</name>
</gene>
<evidence type="ECO:0000255" key="1">
    <source>
        <dbReference type="HAMAP-Rule" id="MF_00503"/>
    </source>
</evidence>
<evidence type="ECO:0000305" key="2"/>
<proteinExistence type="inferred from homology"/>